<protein>
    <recommendedName>
        <fullName evidence="1">Phosphoserine aminotransferase</fullName>
        <ecNumber evidence="1">2.6.1.52</ecNumber>
    </recommendedName>
    <alternativeName>
        <fullName evidence="1">Phosphohydroxythreonine aminotransferase</fullName>
        <shortName evidence="1">PSAT</shortName>
    </alternativeName>
</protein>
<comment type="function">
    <text evidence="1">Catalyzes the reversible conversion of 3-phosphohydroxypyruvate to phosphoserine and of 3-hydroxy-2-oxo-4-phosphonooxybutanoate to phosphohydroxythreonine.</text>
</comment>
<comment type="catalytic activity">
    <reaction evidence="1">
        <text>O-phospho-L-serine + 2-oxoglutarate = 3-phosphooxypyruvate + L-glutamate</text>
        <dbReference type="Rhea" id="RHEA:14329"/>
        <dbReference type="ChEBI" id="CHEBI:16810"/>
        <dbReference type="ChEBI" id="CHEBI:18110"/>
        <dbReference type="ChEBI" id="CHEBI:29985"/>
        <dbReference type="ChEBI" id="CHEBI:57524"/>
        <dbReference type="EC" id="2.6.1.52"/>
    </reaction>
</comment>
<comment type="catalytic activity">
    <reaction evidence="1">
        <text>4-(phosphooxy)-L-threonine + 2-oxoglutarate = (R)-3-hydroxy-2-oxo-4-phosphooxybutanoate + L-glutamate</text>
        <dbReference type="Rhea" id="RHEA:16573"/>
        <dbReference type="ChEBI" id="CHEBI:16810"/>
        <dbReference type="ChEBI" id="CHEBI:29985"/>
        <dbReference type="ChEBI" id="CHEBI:58452"/>
        <dbReference type="ChEBI" id="CHEBI:58538"/>
        <dbReference type="EC" id="2.6.1.52"/>
    </reaction>
</comment>
<comment type="cofactor">
    <cofactor evidence="1">
        <name>pyridoxal 5'-phosphate</name>
        <dbReference type="ChEBI" id="CHEBI:597326"/>
    </cofactor>
    <text evidence="1">Binds 1 pyridoxal phosphate per subunit.</text>
</comment>
<comment type="pathway">
    <text evidence="1">Amino-acid biosynthesis; L-serine biosynthesis; L-serine from 3-phospho-D-glycerate: step 2/3.</text>
</comment>
<comment type="subunit">
    <text evidence="1">Homodimer.</text>
</comment>
<comment type="subcellular location">
    <subcellularLocation>
        <location evidence="1">Cytoplasm</location>
    </subcellularLocation>
</comment>
<comment type="similarity">
    <text evidence="1">Belongs to the class-V pyridoxal-phosphate-dependent aminotransferase family. SerC subfamily.</text>
</comment>
<name>SERC_STRSY</name>
<dbReference type="EC" id="2.6.1.52" evidence="1"/>
<dbReference type="EMBL" id="CP000407">
    <property type="protein sequence ID" value="ABP89631.1"/>
    <property type="molecule type" value="Genomic_DNA"/>
</dbReference>
<dbReference type="SMR" id="A4VU42"/>
<dbReference type="STRING" id="391295.SSU05_0665"/>
<dbReference type="KEGG" id="ssu:SSU05_0665"/>
<dbReference type="eggNOG" id="COG1932">
    <property type="taxonomic scope" value="Bacteria"/>
</dbReference>
<dbReference type="HOGENOM" id="CLU_034866_0_2_9"/>
<dbReference type="UniPathway" id="UPA00135">
    <property type="reaction ID" value="UER00197"/>
</dbReference>
<dbReference type="GO" id="GO:0005737">
    <property type="term" value="C:cytoplasm"/>
    <property type="evidence" value="ECO:0007669"/>
    <property type="project" value="UniProtKB-SubCell"/>
</dbReference>
<dbReference type="GO" id="GO:0004648">
    <property type="term" value="F:O-phospho-L-serine:2-oxoglutarate aminotransferase activity"/>
    <property type="evidence" value="ECO:0007669"/>
    <property type="project" value="UniProtKB-UniRule"/>
</dbReference>
<dbReference type="GO" id="GO:0030170">
    <property type="term" value="F:pyridoxal phosphate binding"/>
    <property type="evidence" value="ECO:0007669"/>
    <property type="project" value="UniProtKB-UniRule"/>
</dbReference>
<dbReference type="GO" id="GO:0006564">
    <property type="term" value="P:L-serine biosynthetic process"/>
    <property type="evidence" value="ECO:0007669"/>
    <property type="project" value="UniProtKB-UniRule"/>
</dbReference>
<dbReference type="FunFam" id="3.40.640.10:FF:000010">
    <property type="entry name" value="Phosphoserine aminotransferase"/>
    <property type="match status" value="1"/>
</dbReference>
<dbReference type="FunFam" id="3.90.1150.10:FF:000006">
    <property type="entry name" value="Phosphoserine aminotransferase"/>
    <property type="match status" value="1"/>
</dbReference>
<dbReference type="Gene3D" id="3.90.1150.10">
    <property type="entry name" value="Aspartate Aminotransferase, domain 1"/>
    <property type="match status" value="1"/>
</dbReference>
<dbReference type="Gene3D" id="3.40.640.10">
    <property type="entry name" value="Type I PLP-dependent aspartate aminotransferase-like (Major domain)"/>
    <property type="match status" value="1"/>
</dbReference>
<dbReference type="HAMAP" id="MF_00160">
    <property type="entry name" value="SerC_aminotrans_5"/>
    <property type="match status" value="1"/>
</dbReference>
<dbReference type="InterPro" id="IPR000192">
    <property type="entry name" value="Aminotrans_V_dom"/>
</dbReference>
<dbReference type="InterPro" id="IPR022278">
    <property type="entry name" value="Pser_aminoTfrase"/>
</dbReference>
<dbReference type="InterPro" id="IPR015424">
    <property type="entry name" value="PyrdxlP-dep_Trfase"/>
</dbReference>
<dbReference type="InterPro" id="IPR015421">
    <property type="entry name" value="PyrdxlP-dep_Trfase_major"/>
</dbReference>
<dbReference type="InterPro" id="IPR015422">
    <property type="entry name" value="PyrdxlP-dep_Trfase_small"/>
</dbReference>
<dbReference type="NCBIfam" id="NF003764">
    <property type="entry name" value="PRK05355.1"/>
    <property type="match status" value="1"/>
</dbReference>
<dbReference type="NCBIfam" id="TIGR01364">
    <property type="entry name" value="serC_1"/>
    <property type="match status" value="1"/>
</dbReference>
<dbReference type="PANTHER" id="PTHR43247">
    <property type="entry name" value="PHOSPHOSERINE AMINOTRANSFERASE"/>
    <property type="match status" value="1"/>
</dbReference>
<dbReference type="PANTHER" id="PTHR43247:SF1">
    <property type="entry name" value="PHOSPHOSERINE AMINOTRANSFERASE"/>
    <property type="match status" value="1"/>
</dbReference>
<dbReference type="Pfam" id="PF00266">
    <property type="entry name" value="Aminotran_5"/>
    <property type="match status" value="1"/>
</dbReference>
<dbReference type="PIRSF" id="PIRSF000525">
    <property type="entry name" value="SerC"/>
    <property type="match status" value="1"/>
</dbReference>
<dbReference type="SUPFAM" id="SSF53383">
    <property type="entry name" value="PLP-dependent transferases"/>
    <property type="match status" value="1"/>
</dbReference>
<sequence length="363" mass="40290">MTIYNFSAGPAVLPKPVLERAQAEFLDYNGSGMSVLEMSHRSKDFDDIIKGAEATLRELMAIPDNYKVIFLQGGASLEFTMIPLNFAQGKKAYYLVGGSWGKKAYTEAVKLSKTIAFEPILLGSTEDITYAELPTFDKNDIDPTAAYVHLTTNNTIEGTAVYDIPDTNGVPVIADMSSNILAARYNVEDFAMIYAGAQKNIGPAGVTVVIVREDFLNDQPMLSSMLDYRIQAENDSLYNTPPAYSIYISKLVFEWVKEIGGVDEMEKINREKSGLLYDYIDQSNFYTNPVRKKEERSVANIPFVSPSEELDAKFVKEATAAGFKNIKGHRSVGGMRASLYNAFPRQGVVELIEFMKKFAVENA</sequence>
<proteinExistence type="inferred from homology"/>
<evidence type="ECO:0000255" key="1">
    <source>
        <dbReference type="HAMAP-Rule" id="MF_00160"/>
    </source>
</evidence>
<reference key="1">
    <citation type="journal article" date="2007" name="PLoS ONE">
        <title>A glimpse of streptococcal toxic shock syndrome from comparative genomics of S. suis 2 Chinese isolates.</title>
        <authorList>
            <person name="Chen C."/>
            <person name="Tang J."/>
            <person name="Dong W."/>
            <person name="Wang C."/>
            <person name="Feng Y."/>
            <person name="Wang J."/>
            <person name="Zheng F."/>
            <person name="Pan X."/>
            <person name="Liu D."/>
            <person name="Li M."/>
            <person name="Song Y."/>
            <person name="Zhu X."/>
            <person name="Sun H."/>
            <person name="Feng T."/>
            <person name="Guo Z."/>
            <person name="Ju A."/>
            <person name="Ge J."/>
            <person name="Dong Y."/>
            <person name="Sun W."/>
            <person name="Jiang Y."/>
            <person name="Wang J."/>
            <person name="Yan J."/>
            <person name="Yang H."/>
            <person name="Wang X."/>
            <person name="Gao G.F."/>
            <person name="Yang R."/>
            <person name="Wang J."/>
            <person name="Yu J."/>
        </authorList>
    </citation>
    <scope>NUCLEOTIDE SEQUENCE [LARGE SCALE GENOMIC DNA]</scope>
    <source>
        <strain>05ZYH33</strain>
    </source>
</reference>
<gene>
    <name evidence="1" type="primary">serC</name>
    <name type="ordered locus">SSU05_0665</name>
</gene>
<feature type="chain" id="PRO_1000058225" description="Phosphoserine aminotransferase">
    <location>
        <begin position="1"/>
        <end position="363"/>
    </location>
</feature>
<feature type="binding site" evidence="1">
    <location>
        <position position="41"/>
    </location>
    <ligand>
        <name>L-glutamate</name>
        <dbReference type="ChEBI" id="CHEBI:29985"/>
    </ligand>
</feature>
<feature type="binding site" evidence="1">
    <location>
        <begin position="75"/>
        <end position="76"/>
    </location>
    <ligand>
        <name>pyridoxal 5'-phosphate</name>
        <dbReference type="ChEBI" id="CHEBI:597326"/>
    </ligand>
</feature>
<feature type="binding site" evidence="1">
    <location>
        <position position="100"/>
    </location>
    <ligand>
        <name>pyridoxal 5'-phosphate</name>
        <dbReference type="ChEBI" id="CHEBI:597326"/>
    </ligand>
</feature>
<feature type="binding site" evidence="1">
    <location>
        <position position="155"/>
    </location>
    <ligand>
        <name>pyridoxal 5'-phosphate</name>
        <dbReference type="ChEBI" id="CHEBI:597326"/>
    </ligand>
</feature>
<feature type="binding site" evidence="1">
    <location>
        <position position="175"/>
    </location>
    <ligand>
        <name>pyridoxal 5'-phosphate</name>
        <dbReference type="ChEBI" id="CHEBI:597326"/>
    </ligand>
</feature>
<feature type="binding site" evidence="1">
    <location>
        <position position="198"/>
    </location>
    <ligand>
        <name>pyridoxal 5'-phosphate</name>
        <dbReference type="ChEBI" id="CHEBI:597326"/>
    </ligand>
</feature>
<feature type="binding site" evidence="1">
    <location>
        <begin position="239"/>
        <end position="240"/>
    </location>
    <ligand>
        <name>pyridoxal 5'-phosphate</name>
        <dbReference type="ChEBI" id="CHEBI:597326"/>
    </ligand>
</feature>
<feature type="modified residue" description="N6-(pyridoxal phosphate)lysine" evidence="1">
    <location>
        <position position="199"/>
    </location>
</feature>
<organism>
    <name type="scientific">Streptococcus suis (strain 05ZYH33)</name>
    <dbReference type="NCBI Taxonomy" id="391295"/>
    <lineage>
        <taxon>Bacteria</taxon>
        <taxon>Bacillati</taxon>
        <taxon>Bacillota</taxon>
        <taxon>Bacilli</taxon>
        <taxon>Lactobacillales</taxon>
        <taxon>Streptococcaceae</taxon>
        <taxon>Streptococcus</taxon>
    </lineage>
</organism>
<accession>A4VU42</accession>
<keyword id="KW-0028">Amino-acid biosynthesis</keyword>
<keyword id="KW-0032">Aminotransferase</keyword>
<keyword id="KW-0963">Cytoplasm</keyword>
<keyword id="KW-0663">Pyridoxal phosphate</keyword>
<keyword id="KW-0718">Serine biosynthesis</keyword>
<keyword id="KW-0808">Transferase</keyword>